<proteinExistence type="evidence at transcript level"/>
<gene>
    <name type="primary">ASPN</name>
</gene>
<comment type="subcellular location">
    <subcellularLocation>
        <location evidence="1">Secreted</location>
        <location evidence="1">Extracellular space</location>
        <location evidence="1">Extracellular matrix</location>
    </subcellularLocation>
</comment>
<comment type="similarity">
    <text evidence="4">Belongs to the small leucine-rich proteoglycan (SLRP) family. SLRP class I subfamily.</text>
</comment>
<protein>
    <recommendedName>
        <fullName>Asporin</fullName>
    </recommendedName>
</protein>
<name>ASPN_BOVIN</name>
<keyword id="KW-1015">Disulfide bond</keyword>
<keyword id="KW-0272">Extracellular matrix</keyword>
<keyword id="KW-0325">Glycoprotein</keyword>
<keyword id="KW-0433">Leucine-rich repeat</keyword>
<keyword id="KW-1185">Reference proteome</keyword>
<keyword id="KW-0677">Repeat</keyword>
<keyword id="KW-0964">Secreted</keyword>
<keyword id="KW-0732">Signal</keyword>
<reference key="1">
    <citation type="submission" date="2005-08" db="EMBL/GenBank/DDBJ databases">
        <authorList>
            <consortium name="NIH - Mammalian Gene Collection (MGC) project"/>
        </authorList>
    </citation>
    <scope>NUCLEOTIDE SEQUENCE [LARGE SCALE MRNA]</scope>
    <source>
        <strain>Hereford</strain>
        <tissue>Thymus</tissue>
    </source>
</reference>
<evidence type="ECO:0000250" key="1"/>
<evidence type="ECO:0000250" key="2">
    <source>
        <dbReference type="UniProtKB" id="P21809"/>
    </source>
</evidence>
<evidence type="ECO:0000255" key="3"/>
<evidence type="ECO:0000305" key="4"/>
<organism>
    <name type="scientific">Bos taurus</name>
    <name type="common">Bovine</name>
    <dbReference type="NCBI Taxonomy" id="9913"/>
    <lineage>
        <taxon>Eukaryota</taxon>
        <taxon>Metazoa</taxon>
        <taxon>Chordata</taxon>
        <taxon>Craniata</taxon>
        <taxon>Vertebrata</taxon>
        <taxon>Euteleostomi</taxon>
        <taxon>Mammalia</taxon>
        <taxon>Eutheria</taxon>
        <taxon>Laurasiatheria</taxon>
        <taxon>Artiodactyla</taxon>
        <taxon>Ruminantia</taxon>
        <taxon>Pecora</taxon>
        <taxon>Bovidae</taxon>
        <taxon>Bovinae</taxon>
        <taxon>Bos</taxon>
    </lineage>
</organism>
<sequence length="370" mass="42119">MKVYVLLVFLTLCSAKPLFHPSYLTLKNLMLKDMEDEGDSDADNSLFPTREPINPFFPFDLFSTCPFGCQCYSRVVHCSDLGLSSVPSNIPFDTRMVDLQNNKIKEIKENDFKGLTSLYALILNNNKLTKIHPKAFLTTKKLRRLYLSHNQLSEIPLNLPKSLAELRIHDNKVKKIQKATFKGMNALHVLEMSANPLDNNGIEPGAFEGVTVFHIRIAEAKLTSIPKELPSTLLELHLDYNKISVVELEDFKRYKDLQRLGLGNNRITDIENGSLANIPRVREIHLENNKLKKVPSGLQELKYLQIIFLHSNSITKVGVNDFCPTVPKMKKSLYSAISLSNNPVKYWEVQPATFRCVLSRMSVQLGNFRK</sequence>
<feature type="signal peptide" evidence="3">
    <location>
        <begin position="1"/>
        <end position="15"/>
    </location>
</feature>
<feature type="chain" id="PRO_0000287716" description="Asporin">
    <location>
        <begin position="16"/>
        <end position="370"/>
    </location>
</feature>
<feature type="domain" description="LRRNT">
    <location>
        <begin position="56"/>
        <end position="92"/>
    </location>
</feature>
<feature type="repeat" description="LRR 1">
    <location>
        <begin position="93"/>
        <end position="114"/>
    </location>
</feature>
<feature type="repeat" description="LRR 2">
    <location>
        <begin position="117"/>
        <end position="138"/>
    </location>
</feature>
<feature type="repeat" description="LRR 3">
    <location>
        <begin position="141"/>
        <end position="163"/>
    </location>
</feature>
<feature type="repeat" description="LRR 4">
    <location>
        <begin position="164"/>
        <end position="183"/>
    </location>
</feature>
<feature type="repeat" description="LRR 5">
    <location>
        <begin position="186"/>
        <end position="209"/>
    </location>
</feature>
<feature type="repeat" description="LRR 6">
    <location>
        <begin position="232"/>
        <end position="253"/>
    </location>
</feature>
<feature type="repeat" description="LRR 7">
    <location>
        <begin position="256"/>
        <end position="277"/>
    </location>
</feature>
<feature type="repeat" description="LRR 8">
    <location>
        <begin position="280"/>
        <end position="302"/>
    </location>
</feature>
<feature type="repeat" description="LRR 9">
    <location>
        <begin position="303"/>
        <end position="324"/>
    </location>
</feature>
<feature type="repeat" description="LRR 10">
    <location>
        <begin position="332"/>
        <end position="354"/>
    </location>
</feature>
<feature type="repeat" description="LRR 11">
    <location>
        <begin position="355"/>
        <end position="370"/>
    </location>
</feature>
<feature type="glycosylation site" description="O-linked (GalNAc...) serine" evidence="1">
    <location>
        <position position="45"/>
    </location>
</feature>
<feature type="glycosylation site" description="N-linked (GlcNAc...) asparagine" evidence="3">
    <location>
        <position position="272"/>
    </location>
</feature>
<feature type="disulfide bond" evidence="2">
    <location>
        <begin position="65"/>
        <end position="71"/>
    </location>
</feature>
<feature type="disulfide bond" evidence="2">
    <location>
        <begin position="69"/>
        <end position="78"/>
    </location>
</feature>
<feature type="disulfide bond" evidence="2">
    <location>
        <begin position="323"/>
        <end position="356"/>
    </location>
</feature>
<accession>Q3ZBN5</accession>
<dbReference type="EMBL" id="BC103199">
    <property type="protein sequence ID" value="AAI03200.1"/>
    <property type="molecule type" value="mRNA"/>
</dbReference>
<dbReference type="RefSeq" id="NP_001029481.1">
    <property type="nucleotide sequence ID" value="NM_001034309.2"/>
</dbReference>
<dbReference type="SMR" id="Q3ZBN5"/>
<dbReference type="FunCoup" id="Q3ZBN5">
    <property type="interactions" value="231"/>
</dbReference>
<dbReference type="STRING" id="9913.ENSBTAP00000034926"/>
<dbReference type="GlyCosmos" id="Q3ZBN5">
    <property type="glycosylation" value="2 sites, No reported glycans"/>
</dbReference>
<dbReference type="GlyGen" id="Q3ZBN5">
    <property type="glycosylation" value="2 sites"/>
</dbReference>
<dbReference type="PaxDb" id="9913-ENSBTAP00000034926"/>
<dbReference type="PeptideAtlas" id="Q3ZBN5"/>
<dbReference type="Ensembl" id="ENSBTAT00000035046.2">
    <property type="protein sequence ID" value="ENSBTAP00000034926.1"/>
    <property type="gene ID" value="ENSBTAG00000011847.5"/>
</dbReference>
<dbReference type="GeneID" id="507990"/>
<dbReference type="KEGG" id="bta:507990"/>
<dbReference type="CTD" id="54829"/>
<dbReference type="VEuPathDB" id="HostDB:ENSBTAG00000011847"/>
<dbReference type="VGNC" id="VGNC:26222">
    <property type="gene designation" value="ASPN"/>
</dbReference>
<dbReference type="eggNOG" id="KOG0619">
    <property type="taxonomic scope" value="Eukaryota"/>
</dbReference>
<dbReference type="GeneTree" id="ENSGT00940000157444"/>
<dbReference type="HOGENOM" id="CLU_000288_186_0_1"/>
<dbReference type="InParanoid" id="Q3ZBN5"/>
<dbReference type="OMA" id="INDFCPT"/>
<dbReference type="OrthoDB" id="1111193at2759"/>
<dbReference type="TreeFam" id="TF334562"/>
<dbReference type="Proteomes" id="UP000009136">
    <property type="component" value="Chromosome 8"/>
</dbReference>
<dbReference type="Bgee" id="ENSBTAG00000011847">
    <property type="expression patterns" value="Expressed in uterine cervix and 104 other cell types or tissues"/>
</dbReference>
<dbReference type="GO" id="GO:0031012">
    <property type="term" value="C:extracellular matrix"/>
    <property type="evidence" value="ECO:0007669"/>
    <property type="project" value="Ensembl"/>
</dbReference>
<dbReference type="GO" id="GO:0005615">
    <property type="term" value="C:extracellular space"/>
    <property type="evidence" value="ECO:0000318"/>
    <property type="project" value="GO_Central"/>
</dbReference>
<dbReference type="GO" id="GO:0005509">
    <property type="term" value="F:calcium ion binding"/>
    <property type="evidence" value="ECO:0007669"/>
    <property type="project" value="Ensembl"/>
</dbReference>
<dbReference type="GO" id="GO:0030282">
    <property type="term" value="P:bone mineralization"/>
    <property type="evidence" value="ECO:0007669"/>
    <property type="project" value="Ensembl"/>
</dbReference>
<dbReference type="GO" id="GO:0070171">
    <property type="term" value="P:negative regulation of tooth mineralization"/>
    <property type="evidence" value="ECO:0007669"/>
    <property type="project" value="Ensembl"/>
</dbReference>
<dbReference type="GO" id="GO:0030512">
    <property type="term" value="P:negative regulation of transforming growth factor beta receptor signaling pathway"/>
    <property type="evidence" value="ECO:0007669"/>
    <property type="project" value="Ensembl"/>
</dbReference>
<dbReference type="FunFam" id="3.80.10.10:FF:000038">
    <property type="entry name" value="Biglycan"/>
    <property type="match status" value="1"/>
</dbReference>
<dbReference type="Gene3D" id="3.80.10.10">
    <property type="entry name" value="Ribonuclease Inhibitor"/>
    <property type="match status" value="1"/>
</dbReference>
<dbReference type="InterPro" id="IPR001611">
    <property type="entry name" value="Leu-rich_rpt"/>
</dbReference>
<dbReference type="InterPro" id="IPR003591">
    <property type="entry name" value="Leu-rich_rpt_typical-subtyp"/>
</dbReference>
<dbReference type="InterPro" id="IPR026906">
    <property type="entry name" value="LRR_5"/>
</dbReference>
<dbReference type="InterPro" id="IPR032675">
    <property type="entry name" value="LRR_dom_sf"/>
</dbReference>
<dbReference type="InterPro" id="IPR000372">
    <property type="entry name" value="LRRNT"/>
</dbReference>
<dbReference type="InterPro" id="IPR050333">
    <property type="entry name" value="SLRP"/>
</dbReference>
<dbReference type="InterPro" id="IPR016352">
    <property type="entry name" value="SLRP_I_decor/aspor/byglycan"/>
</dbReference>
<dbReference type="PANTHER" id="PTHR45712">
    <property type="entry name" value="AGAP008170-PA"/>
    <property type="match status" value="1"/>
</dbReference>
<dbReference type="PANTHER" id="PTHR45712:SF2">
    <property type="entry name" value="ASPORIN"/>
    <property type="match status" value="1"/>
</dbReference>
<dbReference type="Pfam" id="PF13306">
    <property type="entry name" value="LRR_5"/>
    <property type="match status" value="1"/>
</dbReference>
<dbReference type="Pfam" id="PF13855">
    <property type="entry name" value="LRR_8"/>
    <property type="match status" value="2"/>
</dbReference>
<dbReference type="Pfam" id="PF01462">
    <property type="entry name" value="LRRNT"/>
    <property type="match status" value="1"/>
</dbReference>
<dbReference type="PIRSF" id="PIRSF002490">
    <property type="entry name" value="SLRP_I"/>
    <property type="match status" value="1"/>
</dbReference>
<dbReference type="SMART" id="SM00369">
    <property type="entry name" value="LRR_TYP"/>
    <property type="match status" value="8"/>
</dbReference>
<dbReference type="SMART" id="SM00013">
    <property type="entry name" value="LRRNT"/>
    <property type="match status" value="1"/>
</dbReference>
<dbReference type="SUPFAM" id="SSF52058">
    <property type="entry name" value="L domain-like"/>
    <property type="match status" value="1"/>
</dbReference>
<dbReference type="PROSITE" id="PS51450">
    <property type="entry name" value="LRR"/>
    <property type="match status" value="7"/>
</dbReference>